<keyword id="KW-0997">Cell inner membrane</keyword>
<keyword id="KW-1003">Cell membrane</keyword>
<keyword id="KW-0378">Hydrolase</keyword>
<keyword id="KW-0441">Lipid A biosynthesis</keyword>
<keyword id="KW-0444">Lipid biosynthesis</keyword>
<keyword id="KW-0443">Lipid metabolism</keyword>
<keyword id="KW-0464">Manganese</keyword>
<keyword id="KW-0472">Membrane</keyword>
<keyword id="KW-0479">Metal-binding</keyword>
<proteinExistence type="inferred from homology"/>
<feature type="chain" id="PRO_1000191031" description="UDP-2,3-diacylglucosamine hydrolase">
    <location>
        <begin position="1"/>
        <end position="240"/>
    </location>
</feature>
<feature type="binding site" evidence="1">
    <location>
        <position position="8"/>
    </location>
    <ligand>
        <name>Mn(2+)</name>
        <dbReference type="ChEBI" id="CHEBI:29035"/>
        <label>1</label>
    </ligand>
</feature>
<feature type="binding site" evidence="1">
    <location>
        <position position="10"/>
    </location>
    <ligand>
        <name>Mn(2+)</name>
        <dbReference type="ChEBI" id="CHEBI:29035"/>
        <label>1</label>
    </ligand>
</feature>
<feature type="binding site" evidence="1">
    <location>
        <position position="41"/>
    </location>
    <ligand>
        <name>Mn(2+)</name>
        <dbReference type="ChEBI" id="CHEBI:29035"/>
        <label>1</label>
    </ligand>
</feature>
<feature type="binding site" evidence="1">
    <location>
        <position position="41"/>
    </location>
    <ligand>
        <name>Mn(2+)</name>
        <dbReference type="ChEBI" id="CHEBI:29035"/>
        <label>2</label>
    </ligand>
</feature>
<feature type="binding site" evidence="1">
    <location>
        <begin position="79"/>
        <end position="80"/>
    </location>
    <ligand>
        <name>substrate</name>
    </ligand>
</feature>
<feature type="binding site" evidence="1">
    <location>
        <position position="79"/>
    </location>
    <ligand>
        <name>Mn(2+)</name>
        <dbReference type="ChEBI" id="CHEBI:29035"/>
        <label>2</label>
    </ligand>
</feature>
<feature type="binding site" evidence="1">
    <location>
        <position position="114"/>
    </location>
    <ligand>
        <name>Mn(2+)</name>
        <dbReference type="ChEBI" id="CHEBI:29035"/>
        <label>2</label>
    </ligand>
</feature>
<feature type="binding site" evidence="1">
    <location>
        <position position="122"/>
    </location>
    <ligand>
        <name>substrate</name>
    </ligand>
</feature>
<feature type="binding site" evidence="1">
    <location>
        <position position="160"/>
    </location>
    <ligand>
        <name>substrate</name>
    </ligand>
</feature>
<feature type="binding site" evidence="1">
    <location>
        <position position="164"/>
    </location>
    <ligand>
        <name>substrate</name>
    </ligand>
</feature>
<feature type="binding site" evidence="1">
    <location>
        <position position="167"/>
    </location>
    <ligand>
        <name>substrate</name>
    </ligand>
</feature>
<feature type="binding site" evidence="1">
    <location>
        <position position="195"/>
    </location>
    <ligand>
        <name>Mn(2+)</name>
        <dbReference type="ChEBI" id="CHEBI:29035"/>
        <label>2</label>
    </ligand>
</feature>
<feature type="binding site" evidence="1">
    <location>
        <position position="195"/>
    </location>
    <ligand>
        <name>substrate</name>
    </ligand>
</feature>
<feature type="binding site" evidence="1">
    <location>
        <position position="197"/>
    </location>
    <ligand>
        <name>Mn(2+)</name>
        <dbReference type="ChEBI" id="CHEBI:29035"/>
        <label>1</label>
    </ligand>
</feature>
<accession>C0PVI6</accession>
<comment type="function">
    <text evidence="1">Hydrolyzes the pyrophosphate bond of UDP-2,3-diacylglucosamine to yield 2,3-diacylglucosamine 1-phosphate (lipid X) and UMP by catalyzing the attack of water at the alpha-P atom. Involved in the biosynthesis of lipid A, a phosphorylated glycolipid that anchors the lipopolysaccharide to the outer membrane of the cell.</text>
</comment>
<comment type="catalytic activity">
    <reaction evidence="1">
        <text>UDP-2-N,3-O-bis[(3R)-3-hydroxytetradecanoyl]-alpha-D-glucosamine + H2O = 2-N,3-O-bis[(3R)-3-hydroxytetradecanoyl]-alpha-D-glucosaminyl 1-phosphate + UMP + 2 H(+)</text>
        <dbReference type="Rhea" id="RHEA:25213"/>
        <dbReference type="ChEBI" id="CHEBI:15377"/>
        <dbReference type="ChEBI" id="CHEBI:15378"/>
        <dbReference type="ChEBI" id="CHEBI:57865"/>
        <dbReference type="ChEBI" id="CHEBI:57957"/>
        <dbReference type="ChEBI" id="CHEBI:78847"/>
        <dbReference type="EC" id="3.6.1.54"/>
    </reaction>
</comment>
<comment type="cofactor">
    <cofactor evidence="1">
        <name>Mn(2+)</name>
        <dbReference type="ChEBI" id="CHEBI:29035"/>
    </cofactor>
    <text evidence="1">Binds 2 Mn(2+) ions per subunit in a binuclear metal center.</text>
</comment>
<comment type="pathway">
    <text evidence="1">Glycolipid biosynthesis; lipid IV(A) biosynthesis; lipid IV(A) from (3R)-3-hydroxytetradecanoyl-[acyl-carrier-protein] and UDP-N-acetyl-alpha-D-glucosamine: step 4/6.</text>
</comment>
<comment type="subcellular location">
    <subcellularLocation>
        <location evidence="1">Cell inner membrane</location>
        <topology evidence="1">Peripheral membrane protein</topology>
        <orientation evidence="1">Cytoplasmic side</orientation>
    </subcellularLocation>
</comment>
<comment type="similarity">
    <text evidence="1">Belongs to the LpxH family.</text>
</comment>
<dbReference type="EC" id="3.6.1.54" evidence="1"/>
<dbReference type="EMBL" id="CP000857">
    <property type="protein sequence ID" value="ACN44729.1"/>
    <property type="molecule type" value="Genomic_DNA"/>
</dbReference>
<dbReference type="RefSeq" id="WP_000212287.1">
    <property type="nucleotide sequence ID" value="NC_012125.1"/>
</dbReference>
<dbReference type="SMR" id="C0PVI6"/>
<dbReference type="KEGG" id="sei:SPC_0549"/>
<dbReference type="HOGENOM" id="CLU_074586_0_0_6"/>
<dbReference type="UniPathway" id="UPA00359">
    <property type="reaction ID" value="UER00480"/>
</dbReference>
<dbReference type="Proteomes" id="UP000001599">
    <property type="component" value="Chromosome"/>
</dbReference>
<dbReference type="GO" id="GO:0005737">
    <property type="term" value="C:cytoplasm"/>
    <property type="evidence" value="ECO:0007669"/>
    <property type="project" value="InterPro"/>
</dbReference>
<dbReference type="GO" id="GO:0019897">
    <property type="term" value="C:extrinsic component of plasma membrane"/>
    <property type="evidence" value="ECO:0007669"/>
    <property type="project" value="UniProtKB-UniRule"/>
</dbReference>
<dbReference type="GO" id="GO:0030145">
    <property type="term" value="F:manganese ion binding"/>
    <property type="evidence" value="ECO:0007669"/>
    <property type="project" value="UniProtKB-UniRule"/>
</dbReference>
<dbReference type="GO" id="GO:0008758">
    <property type="term" value="F:UDP-2,3-diacylglucosamine hydrolase activity"/>
    <property type="evidence" value="ECO:0007669"/>
    <property type="project" value="UniProtKB-UniRule"/>
</dbReference>
<dbReference type="GO" id="GO:0009245">
    <property type="term" value="P:lipid A biosynthetic process"/>
    <property type="evidence" value="ECO:0007669"/>
    <property type="project" value="UniProtKB-UniRule"/>
</dbReference>
<dbReference type="CDD" id="cd07398">
    <property type="entry name" value="MPP_YbbF-LpxH"/>
    <property type="match status" value="1"/>
</dbReference>
<dbReference type="FunFam" id="3.60.21.10:FF:000012">
    <property type="entry name" value="UDP-2,3-diacylglucosamine hydrolase"/>
    <property type="match status" value="1"/>
</dbReference>
<dbReference type="Gene3D" id="3.60.21.10">
    <property type="match status" value="1"/>
</dbReference>
<dbReference type="HAMAP" id="MF_00575">
    <property type="entry name" value="LpxH"/>
    <property type="match status" value="1"/>
</dbReference>
<dbReference type="InterPro" id="IPR004843">
    <property type="entry name" value="Calcineurin-like_PHP_ApaH"/>
</dbReference>
<dbReference type="InterPro" id="IPR043461">
    <property type="entry name" value="LpxH-like"/>
</dbReference>
<dbReference type="InterPro" id="IPR029052">
    <property type="entry name" value="Metallo-depent_PP-like"/>
</dbReference>
<dbReference type="InterPro" id="IPR010138">
    <property type="entry name" value="UDP-diacylglucosamine_Hdrlase"/>
</dbReference>
<dbReference type="NCBIfam" id="TIGR01854">
    <property type="entry name" value="lipid_A_lpxH"/>
    <property type="match status" value="1"/>
</dbReference>
<dbReference type="NCBIfam" id="NF003743">
    <property type="entry name" value="PRK05340.1"/>
    <property type="match status" value="1"/>
</dbReference>
<dbReference type="PANTHER" id="PTHR34990:SF1">
    <property type="entry name" value="UDP-2,3-DIACYLGLUCOSAMINE HYDROLASE"/>
    <property type="match status" value="1"/>
</dbReference>
<dbReference type="PANTHER" id="PTHR34990">
    <property type="entry name" value="UDP-2,3-DIACYLGLUCOSAMINE HYDROLASE-RELATED"/>
    <property type="match status" value="1"/>
</dbReference>
<dbReference type="Pfam" id="PF00149">
    <property type="entry name" value="Metallophos"/>
    <property type="match status" value="1"/>
</dbReference>
<dbReference type="SUPFAM" id="SSF56300">
    <property type="entry name" value="Metallo-dependent phosphatases"/>
    <property type="match status" value="1"/>
</dbReference>
<evidence type="ECO:0000255" key="1">
    <source>
        <dbReference type="HAMAP-Rule" id="MF_00575"/>
    </source>
</evidence>
<organism>
    <name type="scientific">Salmonella paratyphi C (strain RKS4594)</name>
    <dbReference type="NCBI Taxonomy" id="476213"/>
    <lineage>
        <taxon>Bacteria</taxon>
        <taxon>Pseudomonadati</taxon>
        <taxon>Pseudomonadota</taxon>
        <taxon>Gammaproteobacteria</taxon>
        <taxon>Enterobacterales</taxon>
        <taxon>Enterobacteriaceae</taxon>
        <taxon>Salmonella</taxon>
    </lineage>
</organism>
<name>LPXH_SALPC</name>
<sequence>MATLFIADLHLQTEEPAIVAGFLRFLAVEARQADALYILGDLFEAWIGDDDPNPLHREMAVAIKSLVDSGVPCFFIHGNRDFLIGKRFARESGMILLPQEKVLDLYGRNVLIMHGDTLCTDDAGYQAFRAKVHNPWVQRLFLTLPLFIRRRIAARMRAGSKAANSSKSLDIMDVNAQTVVAEMEKHRVQWLVHGHTHRPAVHELSVNDQPAFRVVLGAWHHEGSMVKVTPDNVELIAFPL</sequence>
<reference key="1">
    <citation type="journal article" date="2009" name="PLoS ONE">
        <title>Salmonella paratyphi C: genetic divergence from Salmonella choleraesuis and pathogenic convergence with Salmonella typhi.</title>
        <authorList>
            <person name="Liu W.-Q."/>
            <person name="Feng Y."/>
            <person name="Wang Y."/>
            <person name="Zou Q.-H."/>
            <person name="Chen F."/>
            <person name="Guo J.-T."/>
            <person name="Peng Y.-H."/>
            <person name="Jin Y."/>
            <person name="Li Y.-G."/>
            <person name="Hu S.-N."/>
            <person name="Johnston R.N."/>
            <person name="Liu G.-R."/>
            <person name="Liu S.-L."/>
        </authorList>
    </citation>
    <scope>NUCLEOTIDE SEQUENCE [LARGE SCALE GENOMIC DNA]</scope>
    <source>
        <strain>RKS4594</strain>
    </source>
</reference>
<protein>
    <recommendedName>
        <fullName evidence="1">UDP-2,3-diacylglucosamine hydrolase</fullName>
        <ecNumber evidence="1">3.6.1.54</ecNumber>
    </recommendedName>
    <alternativeName>
        <fullName evidence="1">UDP-2,3-diacylglucosamine diphosphatase</fullName>
    </alternativeName>
</protein>
<gene>
    <name evidence="1" type="primary">lpxH</name>
    <name type="ordered locus">SPC_0549</name>
</gene>